<reference key="1">
    <citation type="journal article" date="2006" name="Proc. Natl. Acad. Sci. U.S.A.">
        <title>Molecular genetic anatomy of inter- and intraserotype variation in the human bacterial pathogen group A Streptococcus.</title>
        <authorList>
            <person name="Beres S.B."/>
            <person name="Richter E.W."/>
            <person name="Nagiec M.J."/>
            <person name="Sumby P."/>
            <person name="Porcella S.F."/>
            <person name="DeLeo F.R."/>
            <person name="Musser J.M."/>
        </authorList>
    </citation>
    <scope>NUCLEOTIDE SEQUENCE [LARGE SCALE GENOMIC DNA]</scope>
    <source>
        <strain>MGAS10750</strain>
    </source>
</reference>
<comment type="function">
    <text evidence="1">May play a role in DNA repair. It seems to be involved in an RecBC-independent recombinational process of DNA repair. It may act with RecF and RecO.</text>
</comment>
<comment type="similarity">
    <text evidence="1">Belongs to the RecR family.</text>
</comment>
<comment type="sequence caution" evidence="2">
    <conflict type="erroneous initiation">
        <sequence resource="EMBL-CDS" id="ABF38217"/>
    </conflict>
</comment>
<name>RECR_STRPF</name>
<sequence>MLYPTPIAKLIDSYSKLPGIGIKTATRLAFYTIGMSNEDVNDFAKNLLAAKRELTYCSICGNLTDDDPCHICTDTSRDQTTILVVEDAKDVSAMEKIQEYHGYYHVLHGLISPMNGVGPDDINLKSLITRLMDGKVSEVIVATNATADGEATSMYISRVLKPAGIKVTRLARGLAVGSDIEYADEVTLLRAIENRTEL</sequence>
<organism>
    <name type="scientific">Streptococcus pyogenes serotype M4 (strain MGAS10750)</name>
    <dbReference type="NCBI Taxonomy" id="370554"/>
    <lineage>
        <taxon>Bacteria</taxon>
        <taxon>Bacillati</taxon>
        <taxon>Bacillota</taxon>
        <taxon>Bacilli</taxon>
        <taxon>Lactobacillales</taxon>
        <taxon>Streptococcaceae</taxon>
        <taxon>Streptococcus</taxon>
    </lineage>
</organism>
<dbReference type="EMBL" id="CP000262">
    <property type="protein sequence ID" value="ABF38217.1"/>
    <property type="status" value="ALT_INIT"/>
    <property type="molecule type" value="Genomic_DNA"/>
</dbReference>
<dbReference type="SMR" id="Q1J5W6"/>
<dbReference type="KEGG" id="spi:MGAS10750_Spy1267"/>
<dbReference type="HOGENOM" id="CLU_060739_1_0_9"/>
<dbReference type="Proteomes" id="UP000002434">
    <property type="component" value="Chromosome"/>
</dbReference>
<dbReference type="GO" id="GO:0003677">
    <property type="term" value="F:DNA binding"/>
    <property type="evidence" value="ECO:0007669"/>
    <property type="project" value="UniProtKB-UniRule"/>
</dbReference>
<dbReference type="GO" id="GO:0008270">
    <property type="term" value="F:zinc ion binding"/>
    <property type="evidence" value="ECO:0007669"/>
    <property type="project" value="UniProtKB-KW"/>
</dbReference>
<dbReference type="GO" id="GO:0006310">
    <property type="term" value="P:DNA recombination"/>
    <property type="evidence" value="ECO:0007669"/>
    <property type="project" value="UniProtKB-UniRule"/>
</dbReference>
<dbReference type="GO" id="GO:0006281">
    <property type="term" value="P:DNA repair"/>
    <property type="evidence" value="ECO:0007669"/>
    <property type="project" value="UniProtKB-UniRule"/>
</dbReference>
<dbReference type="CDD" id="cd01025">
    <property type="entry name" value="TOPRIM_recR"/>
    <property type="match status" value="1"/>
</dbReference>
<dbReference type="Gene3D" id="3.30.60.80">
    <property type="match status" value="1"/>
</dbReference>
<dbReference type="Gene3D" id="3.40.1360.10">
    <property type="match status" value="1"/>
</dbReference>
<dbReference type="Gene3D" id="6.10.250.240">
    <property type="match status" value="1"/>
</dbReference>
<dbReference type="Gene3D" id="1.10.8.420">
    <property type="entry name" value="RecR Domain 1"/>
    <property type="match status" value="1"/>
</dbReference>
<dbReference type="HAMAP" id="MF_00017">
    <property type="entry name" value="RecR"/>
    <property type="match status" value="1"/>
</dbReference>
<dbReference type="InterPro" id="IPR000093">
    <property type="entry name" value="DNA_Rcmb_RecR"/>
</dbReference>
<dbReference type="InterPro" id="IPR023627">
    <property type="entry name" value="Rcmb_RecR"/>
</dbReference>
<dbReference type="InterPro" id="IPR015967">
    <property type="entry name" value="Rcmb_RecR_Znf"/>
</dbReference>
<dbReference type="InterPro" id="IPR006171">
    <property type="entry name" value="TOPRIM_dom"/>
</dbReference>
<dbReference type="InterPro" id="IPR034137">
    <property type="entry name" value="TOPRIM_RecR"/>
</dbReference>
<dbReference type="NCBIfam" id="TIGR00615">
    <property type="entry name" value="recR"/>
    <property type="match status" value="1"/>
</dbReference>
<dbReference type="PANTHER" id="PTHR30446">
    <property type="entry name" value="RECOMBINATION PROTEIN RECR"/>
    <property type="match status" value="1"/>
</dbReference>
<dbReference type="PANTHER" id="PTHR30446:SF0">
    <property type="entry name" value="RECOMBINATION PROTEIN RECR"/>
    <property type="match status" value="1"/>
</dbReference>
<dbReference type="Pfam" id="PF21175">
    <property type="entry name" value="RecR_C"/>
    <property type="match status" value="1"/>
</dbReference>
<dbReference type="Pfam" id="PF21176">
    <property type="entry name" value="RecR_HhH"/>
    <property type="match status" value="1"/>
</dbReference>
<dbReference type="Pfam" id="PF02132">
    <property type="entry name" value="RecR_ZnF"/>
    <property type="match status" value="1"/>
</dbReference>
<dbReference type="Pfam" id="PF13662">
    <property type="entry name" value="Toprim_4"/>
    <property type="match status" value="1"/>
</dbReference>
<dbReference type="SMART" id="SM00493">
    <property type="entry name" value="TOPRIM"/>
    <property type="match status" value="1"/>
</dbReference>
<dbReference type="SUPFAM" id="SSF111304">
    <property type="entry name" value="Recombination protein RecR"/>
    <property type="match status" value="1"/>
</dbReference>
<dbReference type="PROSITE" id="PS01300">
    <property type="entry name" value="RECR"/>
    <property type="match status" value="1"/>
</dbReference>
<dbReference type="PROSITE" id="PS50880">
    <property type="entry name" value="TOPRIM"/>
    <property type="match status" value="1"/>
</dbReference>
<accession>Q1J5W6</accession>
<feature type="chain" id="PRO_0000322956" description="Recombination protein RecR">
    <location>
        <begin position="1"/>
        <end position="198"/>
    </location>
</feature>
<feature type="domain" description="Toprim" evidence="1">
    <location>
        <begin position="80"/>
        <end position="175"/>
    </location>
</feature>
<feature type="zinc finger region" description="C4-type" evidence="1">
    <location>
        <begin position="57"/>
        <end position="72"/>
    </location>
</feature>
<keyword id="KW-0227">DNA damage</keyword>
<keyword id="KW-0233">DNA recombination</keyword>
<keyword id="KW-0234">DNA repair</keyword>
<keyword id="KW-0479">Metal-binding</keyword>
<keyword id="KW-0862">Zinc</keyword>
<keyword id="KW-0863">Zinc-finger</keyword>
<protein>
    <recommendedName>
        <fullName evidence="1">Recombination protein RecR</fullName>
    </recommendedName>
</protein>
<gene>
    <name evidence="1" type="primary">recR</name>
    <name type="ordered locus">MGAS10750_Spy1267</name>
</gene>
<proteinExistence type="inferred from homology"/>
<evidence type="ECO:0000255" key="1">
    <source>
        <dbReference type="HAMAP-Rule" id="MF_00017"/>
    </source>
</evidence>
<evidence type="ECO:0000305" key="2"/>